<gene>
    <name evidence="1" type="primary">leuS</name>
    <name type="ordered locus">Plut_1636</name>
</gene>
<keyword id="KW-0030">Aminoacyl-tRNA synthetase</keyword>
<keyword id="KW-0067">ATP-binding</keyword>
<keyword id="KW-0963">Cytoplasm</keyword>
<keyword id="KW-0436">Ligase</keyword>
<keyword id="KW-0547">Nucleotide-binding</keyword>
<keyword id="KW-0648">Protein biosynthesis</keyword>
<keyword id="KW-1185">Reference proteome</keyword>
<protein>
    <recommendedName>
        <fullName evidence="1">Leucine--tRNA ligase</fullName>
        <ecNumber evidence="1">6.1.1.4</ecNumber>
    </recommendedName>
    <alternativeName>
        <fullName evidence="1">Leucyl-tRNA synthetase</fullName>
        <shortName evidence="1">LeuRS</shortName>
    </alternativeName>
</protein>
<organism>
    <name type="scientific">Chlorobium luteolum (strain DSM 273 / BCRC 81028 / 2530)</name>
    <name type="common">Pelodictyon luteolum</name>
    <dbReference type="NCBI Taxonomy" id="319225"/>
    <lineage>
        <taxon>Bacteria</taxon>
        <taxon>Pseudomonadati</taxon>
        <taxon>Chlorobiota</taxon>
        <taxon>Chlorobiia</taxon>
        <taxon>Chlorobiales</taxon>
        <taxon>Chlorobiaceae</taxon>
        <taxon>Chlorobium/Pelodictyon group</taxon>
        <taxon>Pelodictyon</taxon>
    </lineage>
</organism>
<proteinExistence type="inferred from homology"/>
<feature type="chain" id="PRO_1000009388" description="Leucine--tRNA ligase">
    <location>
        <begin position="1"/>
        <end position="805"/>
    </location>
</feature>
<feature type="short sequence motif" description="'HIGH' region">
    <location>
        <begin position="40"/>
        <end position="51"/>
    </location>
</feature>
<feature type="short sequence motif" description="'KMSKS' region">
    <location>
        <begin position="576"/>
        <end position="580"/>
    </location>
</feature>
<feature type="binding site" evidence="1">
    <location>
        <position position="579"/>
    </location>
    <ligand>
        <name>ATP</name>
        <dbReference type="ChEBI" id="CHEBI:30616"/>
    </ligand>
</feature>
<name>SYL_CHLL3</name>
<sequence length="805" mass="91936">MKYDFSHTEKKWQAYWQEHGTFQAEEGQEKPKYYVLDMFPYPSGSGLHVGHLEGYTASDIVARYRRSRGNNVLHPMGWDAFGLPAEQYAIKTGTHPSLTTENNIRSFRETLQAMGFSYDWSREINTTDPGYFRWTQWIFLKLYEMGLAYQSEVDVNWCVELRAVLANEEVEEKIAEGLTVVRRPLRQWVLKITAYAERLLLDLDGLDWPENVKQMQRNWIGRSEGVEVDFELRCHRKMLRVYTTRPDTLFGATYLVISPEHPMAEKLATAPQLVEVKNYISKAKLKTELERTGLQKDKTGVFTGSYAINPANGEALPVWISDFVLTSYGTGAIMSVPAHDSRDWEFAKKFGLPIVEVVKSPHDVQDAVYEGKDSTAVNSSNSEISLDGLAFPEAFERMASWLELKKCGERKVNYRLRDWIFSRQRYWGEPIPVKHYEDGSLGTETDLPLRLPEVEAYQPTETGESPLANIPEWLYGTDGKGAFRRETNTMPQWAGSCWYYLRFIDPRNSEHLVDAEKEHYWMNVDLYIGGAEHAVLHLLYARFWHKVLYDLKVVSTKEPFQKLFNQGMILGEDGEKMSKSRGNVIPADHVLEKYGADAVRLYEMFLGPLEQVKPWNTNGIEGVSRFLNRVWRLVHPDTEGPAAVLDEAAMPGELLRRMHKTVKKVREDTECLKFNTAIAEMMVFVNDLHRTGNRNREAIETLVLLLAPYAPHISEELWEALGHPESIARAPFPTFDPALAANDVLTIAVQVNGKLRGTFEAAKDASKEEMLEAARAVESVRKFIEGSTVVKEIVVPGKLINFAVK</sequence>
<accession>Q3B2E1</accession>
<dbReference type="EC" id="6.1.1.4" evidence="1"/>
<dbReference type="EMBL" id="CP000096">
    <property type="protein sequence ID" value="ABB24490.1"/>
    <property type="molecule type" value="Genomic_DNA"/>
</dbReference>
<dbReference type="RefSeq" id="WP_011358362.1">
    <property type="nucleotide sequence ID" value="NC_007512.1"/>
</dbReference>
<dbReference type="SMR" id="Q3B2E1"/>
<dbReference type="STRING" id="319225.Plut_1636"/>
<dbReference type="KEGG" id="plt:Plut_1636"/>
<dbReference type="eggNOG" id="COG0495">
    <property type="taxonomic scope" value="Bacteria"/>
</dbReference>
<dbReference type="HOGENOM" id="CLU_004427_0_0_10"/>
<dbReference type="OrthoDB" id="9810365at2"/>
<dbReference type="Proteomes" id="UP000002709">
    <property type="component" value="Chromosome"/>
</dbReference>
<dbReference type="GO" id="GO:0005829">
    <property type="term" value="C:cytosol"/>
    <property type="evidence" value="ECO:0007669"/>
    <property type="project" value="TreeGrafter"/>
</dbReference>
<dbReference type="GO" id="GO:0002161">
    <property type="term" value="F:aminoacyl-tRNA deacylase activity"/>
    <property type="evidence" value="ECO:0007669"/>
    <property type="project" value="InterPro"/>
</dbReference>
<dbReference type="GO" id="GO:0005524">
    <property type="term" value="F:ATP binding"/>
    <property type="evidence" value="ECO:0007669"/>
    <property type="project" value="UniProtKB-UniRule"/>
</dbReference>
<dbReference type="GO" id="GO:0004823">
    <property type="term" value="F:leucine-tRNA ligase activity"/>
    <property type="evidence" value="ECO:0007669"/>
    <property type="project" value="UniProtKB-UniRule"/>
</dbReference>
<dbReference type="GO" id="GO:0006429">
    <property type="term" value="P:leucyl-tRNA aminoacylation"/>
    <property type="evidence" value="ECO:0007669"/>
    <property type="project" value="UniProtKB-UniRule"/>
</dbReference>
<dbReference type="CDD" id="cd07958">
    <property type="entry name" value="Anticodon_Ia_Leu_BEm"/>
    <property type="match status" value="1"/>
</dbReference>
<dbReference type="CDD" id="cd00812">
    <property type="entry name" value="LeuRS_core"/>
    <property type="match status" value="1"/>
</dbReference>
<dbReference type="FunFam" id="3.10.20.590:FF:000001">
    <property type="entry name" value="Leucine--tRNA ligase"/>
    <property type="match status" value="1"/>
</dbReference>
<dbReference type="FunFam" id="3.40.50.620:FF:000056">
    <property type="entry name" value="Leucine--tRNA ligase"/>
    <property type="match status" value="1"/>
</dbReference>
<dbReference type="FunFam" id="3.40.50.620:FF:000077">
    <property type="entry name" value="Leucine--tRNA ligase"/>
    <property type="match status" value="1"/>
</dbReference>
<dbReference type="FunFam" id="1.10.730.10:FF:000011">
    <property type="entry name" value="Leucine--tRNA ligase chloroplastic/mitochondrial"/>
    <property type="match status" value="1"/>
</dbReference>
<dbReference type="Gene3D" id="3.10.20.590">
    <property type="match status" value="1"/>
</dbReference>
<dbReference type="Gene3D" id="3.40.50.620">
    <property type="entry name" value="HUPs"/>
    <property type="match status" value="2"/>
</dbReference>
<dbReference type="Gene3D" id="1.10.730.10">
    <property type="entry name" value="Isoleucyl-tRNA Synthetase, Domain 1"/>
    <property type="match status" value="1"/>
</dbReference>
<dbReference type="HAMAP" id="MF_00049_B">
    <property type="entry name" value="Leu_tRNA_synth_B"/>
    <property type="match status" value="1"/>
</dbReference>
<dbReference type="InterPro" id="IPR002300">
    <property type="entry name" value="aa-tRNA-synth_Ia"/>
</dbReference>
<dbReference type="InterPro" id="IPR002302">
    <property type="entry name" value="Leu-tRNA-ligase"/>
</dbReference>
<dbReference type="InterPro" id="IPR025709">
    <property type="entry name" value="Leu_tRNA-synth_edit"/>
</dbReference>
<dbReference type="InterPro" id="IPR013155">
    <property type="entry name" value="M/V/L/I-tRNA-synth_anticd-bd"/>
</dbReference>
<dbReference type="InterPro" id="IPR015413">
    <property type="entry name" value="Methionyl/Leucyl_tRNA_Synth"/>
</dbReference>
<dbReference type="InterPro" id="IPR014729">
    <property type="entry name" value="Rossmann-like_a/b/a_fold"/>
</dbReference>
<dbReference type="InterPro" id="IPR009080">
    <property type="entry name" value="tRNAsynth_Ia_anticodon-bd"/>
</dbReference>
<dbReference type="InterPro" id="IPR009008">
    <property type="entry name" value="Val/Leu/Ile-tRNA-synth_edit"/>
</dbReference>
<dbReference type="NCBIfam" id="TIGR00396">
    <property type="entry name" value="leuS_bact"/>
    <property type="match status" value="1"/>
</dbReference>
<dbReference type="PANTHER" id="PTHR43740:SF2">
    <property type="entry name" value="LEUCINE--TRNA LIGASE, MITOCHONDRIAL"/>
    <property type="match status" value="1"/>
</dbReference>
<dbReference type="PANTHER" id="PTHR43740">
    <property type="entry name" value="LEUCYL-TRNA SYNTHETASE"/>
    <property type="match status" value="1"/>
</dbReference>
<dbReference type="Pfam" id="PF08264">
    <property type="entry name" value="Anticodon_1"/>
    <property type="match status" value="1"/>
</dbReference>
<dbReference type="Pfam" id="PF00133">
    <property type="entry name" value="tRNA-synt_1"/>
    <property type="match status" value="1"/>
</dbReference>
<dbReference type="Pfam" id="PF13603">
    <property type="entry name" value="tRNA-synt_1_2"/>
    <property type="match status" value="1"/>
</dbReference>
<dbReference type="Pfam" id="PF09334">
    <property type="entry name" value="tRNA-synt_1g"/>
    <property type="match status" value="1"/>
</dbReference>
<dbReference type="PRINTS" id="PR00985">
    <property type="entry name" value="TRNASYNTHLEU"/>
</dbReference>
<dbReference type="SUPFAM" id="SSF47323">
    <property type="entry name" value="Anticodon-binding domain of a subclass of class I aminoacyl-tRNA synthetases"/>
    <property type="match status" value="1"/>
</dbReference>
<dbReference type="SUPFAM" id="SSF52374">
    <property type="entry name" value="Nucleotidylyl transferase"/>
    <property type="match status" value="1"/>
</dbReference>
<dbReference type="SUPFAM" id="SSF50677">
    <property type="entry name" value="ValRS/IleRS/LeuRS editing domain"/>
    <property type="match status" value="1"/>
</dbReference>
<reference key="1">
    <citation type="submission" date="2005-08" db="EMBL/GenBank/DDBJ databases">
        <title>Complete sequence of Pelodictyon luteolum DSM 273.</title>
        <authorList>
            <consortium name="US DOE Joint Genome Institute"/>
            <person name="Copeland A."/>
            <person name="Lucas S."/>
            <person name="Lapidus A."/>
            <person name="Barry K."/>
            <person name="Detter J.C."/>
            <person name="Glavina T."/>
            <person name="Hammon N."/>
            <person name="Israni S."/>
            <person name="Pitluck S."/>
            <person name="Bryant D."/>
            <person name="Schmutz J."/>
            <person name="Larimer F."/>
            <person name="Land M."/>
            <person name="Kyrpides N."/>
            <person name="Ivanova N."/>
            <person name="Richardson P."/>
        </authorList>
    </citation>
    <scope>NUCLEOTIDE SEQUENCE [LARGE SCALE GENOMIC DNA]</scope>
    <source>
        <strain>DSM 273 / BCRC 81028 / 2530</strain>
    </source>
</reference>
<comment type="catalytic activity">
    <reaction evidence="1">
        <text>tRNA(Leu) + L-leucine + ATP = L-leucyl-tRNA(Leu) + AMP + diphosphate</text>
        <dbReference type="Rhea" id="RHEA:11688"/>
        <dbReference type="Rhea" id="RHEA-COMP:9613"/>
        <dbReference type="Rhea" id="RHEA-COMP:9622"/>
        <dbReference type="ChEBI" id="CHEBI:30616"/>
        <dbReference type="ChEBI" id="CHEBI:33019"/>
        <dbReference type="ChEBI" id="CHEBI:57427"/>
        <dbReference type="ChEBI" id="CHEBI:78442"/>
        <dbReference type="ChEBI" id="CHEBI:78494"/>
        <dbReference type="ChEBI" id="CHEBI:456215"/>
        <dbReference type="EC" id="6.1.1.4"/>
    </reaction>
</comment>
<comment type="subcellular location">
    <subcellularLocation>
        <location evidence="1">Cytoplasm</location>
    </subcellularLocation>
</comment>
<comment type="similarity">
    <text evidence="1">Belongs to the class-I aminoacyl-tRNA synthetase family.</text>
</comment>
<evidence type="ECO:0000255" key="1">
    <source>
        <dbReference type="HAMAP-Rule" id="MF_00049"/>
    </source>
</evidence>